<dbReference type="EMBL" id="AE016795">
    <property type="protein sequence ID" value="AAO09388.1"/>
    <property type="molecule type" value="Genomic_DNA"/>
</dbReference>
<dbReference type="RefSeq" id="WP_011078952.1">
    <property type="nucleotide sequence ID" value="NC_004459.3"/>
</dbReference>
<dbReference type="KEGG" id="vvu:VV1_0885"/>
<dbReference type="HOGENOM" id="CLU_032288_0_0_6"/>
<dbReference type="Proteomes" id="UP000002275">
    <property type="component" value="Chromosome 1"/>
</dbReference>
<dbReference type="GO" id="GO:0005886">
    <property type="term" value="C:plasma membrane"/>
    <property type="evidence" value="ECO:0007669"/>
    <property type="project" value="UniProtKB-SubCell"/>
</dbReference>
<dbReference type="HAMAP" id="MF_00672">
    <property type="entry name" value="UPF0761"/>
    <property type="match status" value="1"/>
</dbReference>
<dbReference type="InterPro" id="IPR023679">
    <property type="entry name" value="UPF0761_bac"/>
</dbReference>
<dbReference type="InterPro" id="IPR017039">
    <property type="entry name" value="Virul_fac_BrkB"/>
</dbReference>
<dbReference type="NCBIfam" id="NF002457">
    <property type="entry name" value="PRK01637.1"/>
    <property type="match status" value="1"/>
</dbReference>
<dbReference type="NCBIfam" id="TIGR00765">
    <property type="entry name" value="yihY_not_rbn"/>
    <property type="match status" value="1"/>
</dbReference>
<dbReference type="PANTHER" id="PTHR30213">
    <property type="entry name" value="INNER MEMBRANE PROTEIN YHJD"/>
    <property type="match status" value="1"/>
</dbReference>
<dbReference type="PANTHER" id="PTHR30213:SF0">
    <property type="entry name" value="UPF0761 MEMBRANE PROTEIN YIHY"/>
    <property type="match status" value="1"/>
</dbReference>
<dbReference type="Pfam" id="PF03631">
    <property type="entry name" value="Virul_fac_BrkB"/>
    <property type="match status" value="1"/>
</dbReference>
<dbReference type="PIRSF" id="PIRSF035875">
    <property type="entry name" value="RNase_BN"/>
    <property type="match status" value="1"/>
</dbReference>
<proteinExistence type="inferred from homology"/>
<name>Y885_VIBVU</name>
<keyword id="KW-0997">Cell inner membrane</keyword>
<keyword id="KW-1003">Cell membrane</keyword>
<keyword id="KW-0472">Membrane</keyword>
<keyword id="KW-0812">Transmembrane</keyword>
<keyword id="KW-1133">Transmembrane helix</keyword>
<gene>
    <name type="ordered locus">VV1_0885</name>
</gene>
<organism>
    <name type="scientific">Vibrio vulnificus (strain CMCP6)</name>
    <dbReference type="NCBI Taxonomy" id="216895"/>
    <lineage>
        <taxon>Bacteria</taxon>
        <taxon>Pseudomonadati</taxon>
        <taxon>Pseudomonadota</taxon>
        <taxon>Gammaproteobacteria</taxon>
        <taxon>Vibrionales</taxon>
        <taxon>Vibrionaceae</taxon>
        <taxon>Vibrio</taxon>
    </lineage>
</organism>
<feature type="chain" id="PRO_0000201001" description="UPF0761 membrane protein VV1_0885">
    <location>
        <begin position="1"/>
        <end position="313"/>
    </location>
</feature>
<feature type="transmembrane region" description="Helical" evidence="1">
    <location>
        <begin position="41"/>
        <end position="61"/>
    </location>
</feature>
<feature type="transmembrane region" description="Helical" evidence="1">
    <location>
        <begin position="104"/>
        <end position="124"/>
    </location>
</feature>
<feature type="transmembrane region" description="Helical" evidence="1">
    <location>
        <begin position="139"/>
        <end position="159"/>
    </location>
</feature>
<feature type="transmembrane region" description="Helical" evidence="1">
    <location>
        <begin position="185"/>
        <end position="205"/>
    </location>
</feature>
<feature type="transmembrane region" description="Helical" evidence="1">
    <location>
        <begin position="215"/>
        <end position="235"/>
    </location>
</feature>
<feature type="transmembrane region" description="Helical" evidence="1">
    <location>
        <begin position="249"/>
        <end position="269"/>
    </location>
</feature>
<feature type="region of interest" description="Disordered" evidence="2">
    <location>
        <begin position="294"/>
        <end position="313"/>
    </location>
</feature>
<feature type="compositionally biased region" description="Basic and acidic residues" evidence="2">
    <location>
        <begin position="299"/>
        <end position="313"/>
    </location>
</feature>
<comment type="subcellular location">
    <subcellularLocation>
        <location evidence="1">Cell inner membrane</location>
        <topology evidence="1">Multi-pass membrane protein</topology>
    </subcellularLocation>
</comment>
<comment type="similarity">
    <text evidence="1">Belongs to the UPF0761 family.</text>
</comment>
<accession>Q8DDS2</accession>
<sequence length="313" mass="34859">MNQLFGSDKLRLPQRAQAGIAFVRYLIARMNHDRINVNAGYLAYITLLSIVPMLTVLLSILSKFSVFENVGSVLQSFIINNFVPASGDAVHAALQEFIANTGKMTAVGAAFLFVAALMLISNIDKNLNYIWRVKKKRRAVFSFSMYWMVLTLGPILVGASIAATSYITSLRLLDSEAISTVYDQLLRWLPFILSSSAFVGLYLLVPNKKVQFSHAVVGAMIAAVLFELSKKGFAAYITQFPSYQLIYGALAAIPILFVWVYLCWLIVLIGAEVTAALGEREHWRPAEDVIQSLPNNDTELEKDTQRDRFDSES</sequence>
<evidence type="ECO:0000255" key="1">
    <source>
        <dbReference type="HAMAP-Rule" id="MF_00672"/>
    </source>
</evidence>
<evidence type="ECO:0000256" key="2">
    <source>
        <dbReference type="SAM" id="MobiDB-lite"/>
    </source>
</evidence>
<reference key="1">
    <citation type="submission" date="2002-12" db="EMBL/GenBank/DDBJ databases">
        <title>Complete genome sequence of Vibrio vulnificus CMCP6.</title>
        <authorList>
            <person name="Rhee J.H."/>
            <person name="Kim S.Y."/>
            <person name="Chung S.S."/>
            <person name="Kim J.J."/>
            <person name="Moon Y.H."/>
            <person name="Jeong H."/>
            <person name="Choy H.E."/>
        </authorList>
    </citation>
    <scope>NUCLEOTIDE SEQUENCE [LARGE SCALE GENOMIC DNA]</scope>
    <source>
        <strain>CMCP6</strain>
    </source>
</reference>
<protein>
    <recommendedName>
        <fullName evidence="1">UPF0761 membrane protein VV1_0885</fullName>
    </recommendedName>
</protein>